<dbReference type="EMBL" id="CP001298">
    <property type="protein sequence ID" value="ACK83285.1"/>
    <property type="molecule type" value="Genomic_DNA"/>
</dbReference>
<dbReference type="RefSeq" id="WP_012253645.1">
    <property type="nucleotide sequence ID" value="NC_011757.1"/>
</dbReference>
<dbReference type="SMR" id="B7L0R4"/>
<dbReference type="GeneID" id="72989853"/>
<dbReference type="KEGG" id="mch:Mchl_2443"/>
<dbReference type="HOGENOM" id="CLU_036235_2_1_5"/>
<dbReference type="Proteomes" id="UP000002385">
    <property type="component" value="Chromosome"/>
</dbReference>
<dbReference type="GO" id="GO:0015934">
    <property type="term" value="C:large ribosomal subunit"/>
    <property type="evidence" value="ECO:0007669"/>
    <property type="project" value="InterPro"/>
</dbReference>
<dbReference type="GO" id="GO:0019843">
    <property type="term" value="F:rRNA binding"/>
    <property type="evidence" value="ECO:0007669"/>
    <property type="project" value="UniProtKB-UniRule"/>
</dbReference>
<dbReference type="GO" id="GO:0003735">
    <property type="term" value="F:structural constituent of ribosome"/>
    <property type="evidence" value="ECO:0007669"/>
    <property type="project" value="InterPro"/>
</dbReference>
<dbReference type="GO" id="GO:0016740">
    <property type="term" value="F:transferase activity"/>
    <property type="evidence" value="ECO:0007669"/>
    <property type="project" value="InterPro"/>
</dbReference>
<dbReference type="GO" id="GO:0002181">
    <property type="term" value="P:cytoplasmic translation"/>
    <property type="evidence" value="ECO:0007669"/>
    <property type="project" value="TreeGrafter"/>
</dbReference>
<dbReference type="FunFam" id="2.30.30.30:FF:000055">
    <property type="entry name" value="50S ribosomal protein L2"/>
    <property type="match status" value="1"/>
</dbReference>
<dbReference type="FunFam" id="4.10.950.10:FF:000001">
    <property type="entry name" value="50S ribosomal protein L2"/>
    <property type="match status" value="1"/>
</dbReference>
<dbReference type="Gene3D" id="2.30.30.30">
    <property type="match status" value="1"/>
</dbReference>
<dbReference type="Gene3D" id="2.40.50.140">
    <property type="entry name" value="Nucleic acid-binding proteins"/>
    <property type="match status" value="1"/>
</dbReference>
<dbReference type="Gene3D" id="4.10.950.10">
    <property type="entry name" value="Ribosomal protein L2, domain 3"/>
    <property type="match status" value="1"/>
</dbReference>
<dbReference type="HAMAP" id="MF_01320_B">
    <property type="entry name" value="Ribosomal_uL2_B"/>
    <property type="match status" value="1"/>
</dbReference>
<dbReference type="InterPro" id="IPR012340">
    <property type="entry name" value="NA-bd_OB-fold"/>
</dbReference>
<dbReference type="InterPro" id="IPR014722">
    <property type="entry name" value="Rib_uL2_dom2"/>
</dbReference>
<dbReference type="InterPro" id="IPR002171">
    <property type="entry name" value="Ribosomal_uL2"/>
</dbReference>
<dbReference type="InterPro" id="IPR005880">
    <property type="entry name" value="Ribosomal_uL2_bac/org-type"/>
</dbReference>
<dbReference type="InterPro" id="IPR022669">
    <property type="entry name" value="Ribosomal_uL2_C"/>
</dbReference>
<dbReference type="InterPro" id="IPR022671">
    <property type="entry name" value="Ribosomal_uL2_CS"/>
</dbReference>
<dbReference type="InterPro" id="IPR014726">
    <property type="entry name" value="Ribosomal_uL2_dom3"/>
</dbReference>
<dbReference type="InterPro" id="IPR022666">
    <property type="entry name" value="Ribosomal_uL2_RNA-bd_dom"/>
</dbReference>
<dbReference type="InterPro" id="IPR008991">
    <property type="entry name" value="Translation_prot_SH3-like_sf"/>
</dbReference>
<dbReference type="NCBIfam" id="TIGR01171">
    <property type="entry name" value="rplB_bact"/>
    <property type="match status" value="1"/>
</dbReference>
<dbReference type="PANTHER" id="PTHR13691:SF5">
    <property type="entry name" value="LARGE RIBOSOMAL SUBUNIT PROTEIN UL2M"/>
    <property type="match status" value="1"/>
</dbReference>
<dbReference type="PANTHER" id="PTHR13691">
    <property type="entry name" value="RIBOSOMAL PROTEIN L2"/>
    <property type="match status" value="1"/>
</dbReference>
<dbReference type="Pfam" id="PF00181">
    <property type="entry name" value="Ribosomal_L2"/>
    <property type="match status" value="1"/>
</dbReference>
<dbReference type="Pfam" id="PF03947">
    <property type="entry name" value="Ribosomal_L2_C"/>
    <property type="match status" value="1"/>
</dbReference>
<dbReference type="PIRSF" id="PIRSF002158">
    <property type="entry name" value="Ribosomal_L2"/>
    <property type="match status" value="1"/>
</dbReference>
<dbReference type="SMART" id="SM01383">
    <property type="entry name" value="Ribosomal_L2"/>
    <property type="match status" value="1"/>
</dbReference>
<dbReference type="SMART" id="SM01382">
    <property type="entry name" value="Ribosomal_L2_C"/>
    <property type="match status" value="1"/>
</dbReference>
<dbReference type="SUPFAM" id="SSF50249">
    <property type="entry name" value="Nucleic acid-binding proteins"/>
    <property type="match status" value="1"/>
</dbReference>
<dbReference type="SUPFAM" id="SSF50104">
    <property type="entry name" value="Translation proteins SH3-like domain"/>
    <property type="match status" value="1"/>
</dbReference>
<dbReference type="PROSITE" id="PS00467">
    <property type="entry name" value="RIBOSOMAL_L2"/>
    <property type="match status" value="1"/>
</dbReference>
<comment type="function">
    <text evidence="1">One of the primary rRNA binding proteins. Required for association of the 30S and 50S subunits to form the 70S ribosome, for tRNA binding and peptide bond formation. It has been suggested to have peptidyltransferase activity; this is somewhat controversial. Makes several contacts with the 16S rRNA in the 70S ribosome.</text>
</comment>
<comment type="subunit">
    <text evidence="1">Part of the 50S ribosomal subunit. Forms a bridge to the 30S subunit in the 70S ribosome.</text>
</comment>
<comment type="similarity">
    <text evidence="1">Belongs to the universal ribosomal protein uL2 family.</text>
</comment>
<accession>B7L0R4</accession>
<organism>
    <name type="scientific">Methylorubrum extorquens (strain CM4 / NCIMB 13688)</name>
    <name type="common">Methylobacterium extorquens</name>
    <dbReference type="NCBI Taxonomy" id="440085"/>
    <lineage>
        <taxon>Bacteria</taxon>
        <taxon>Pseudomonadati</taxon>
        <taxon>Pseudomonadota</taxon>
        <taxon>Alphaproteobacteria</taxon>
        <taxon>Hyphomicrobiales</taxon>
        <taxon>Methylobacteriaceae</taxon>
        <taxon>Methylorubrum</taxon>
    </lineage>
</organism>
<gene>
    <name evidence="1" type="primary">rplB</name>
    <name type="ordered locus">Mchl_2443</name>
</gene>
<protein>
    <recommendedName>
        <fullName evidence="1">Large ribosomal subunit protein uL2</fullName>
    </recommendedName>
    <alternativeName>
        <fullName evidence="3">50S ribosomal protein L2</fullName>
    </alternativeName>
</protein>
<name>RL2_METC4</name>
<reference key="1">
    <citation type="submission" date="2008-12" db="EMBL/GenBank/DDBJ databases">
        <title>Complete sequence of chromosome of Methylobacterium chloromethanicum CM4.</title>
        <authorList>
            <consortium name="US DOE Joint Genome Institute"/>
            <person name="Lucas S."/>
            <person name="Copeland A."/>
            <person name="Lapidus A."/>
            <person name="Glavina del Rio T."/>
            <person name="Dalin E."/>
            <person name="Tice H."/>
            <person name="Bruce D."/>
            <person name="Goodwin L."/>
            <person name="Pitluck S."/>
            <person name="Chertkov O."/>
            <person name="Brettin T."/>
            <person name="Detter J.C."/>
            <person name="Han C."/>
            <person name="Larimer F."/>
            <person name="Land M."/>
            <person name="Hauser L."/>
            <person name="Kyrpides N."/>
            <person name="Mikhailova N."/>
            <person name="Marx C."/>
            <person name="Richardson P."/>
        </authorList>
    </citation>
    <scope>NUCLEOTIDE SEQUENCE [LARGE SCALE GENOMIC DNA]</scope>
    <source>
        <strain>CM4 / NCIMB 13688</strain>
    </source>
</reference>
<feature type="chain" id="PRO_1000165756" description="Large ribosomal subunit protein uL2">
    <location>
        <begin position="1"/>
        <end position="278"/>
    </location>
</feature>
<feature type="region of interest" description="Disordered" evidence="2">
    <location>
        <begin position="224"/>
        <end position="278"/>
    </location>
</feature>
<proteinExistence type="inferred from homology"/>
<keyword id="KW-0687">Ribonucleoprotein</keyword>
<keyword id="KW-0689">Ribosomal protein</keyword>
<keyword id="KW-0694">RNA-binding</keyword>
<keyword id="KW-0699">rRNA-binding</keyword>
<evidence type="ECO:0000255" key="1">
    <source>
        <dbReference type="HAMAP-Rule" id="MF_01320"/>
    </source>
</evidence>
<evidence type="ECO:0000256" key="2">
    <source>
        <dbReference type="SAM" id="MobiDB-lite"/>
    </source>
</evidence>
<evidence type="ECO:0000305" key="3"/>
<sequence>MALKTFKPVTPSLRQLVLVDRRELYKGKPVKALTEGKSSSGGRNNLGRITVRFRGGGHKRVLRNVDFKRRENLNVPATVERIEYDPNRTAFIALITFPDGKQSYILAPQRLSPGDKVIAGESVDVKPGNAAPIGSMPVGTIVHNVELKIGKGGAIARSAGNYAQIVGRDQGYVTLRLNSGEQRLVHGQCFATVGAVSNPDHMNISLGKAGRNRWLGKRPHVRGVAMNPVDHPHGGGEGRTSGGRNPVTPWGVPTKGKKTRSNKRTDTFILSSRHNRKK</sequence>